<evidence type="ECO:0000255" key="1"/>
<evidence type="ECO:0000255" key="2">
    <source>
        <dbReference type="PROSITE-ProRule" id="PRU01150"/>
    </source>
</evidence>
<evidence type="ECO:0000256" key="3">
    <source>
        <dbReference type="SAM" id="MobiDB-lite"/>
    </source>
</evidence>
<evidence type="ECO:0000269" key="4">
    <source>
    </source>
</evidence>
<evidence type="ECO:0000269" key="5">
    <source>
    </source>
</evidence>
<evidence type="ECO:0000269" key="6">
    <source>
    </source>
</evidence>
<evidence type="ECO:0000305" key="7"/>
<keyword id="KW-0963">Cytoplasm</keyword>
<keyword id="KW-1015">Disulfide bond</keyword>
<keyword id="KW-0496">Mitochondrion</keyword>
<keyword id="KW-1185">Reference proteome</keyword>
<keyword id="KW-0809">Transit peptide</keyword>
<gene>
    <name type="primary">COX23</name>
    <name type="ordered locus">YHR116W</name>
</gene>
<accession>P38824</accession>
<accession>D3DL66</accession>
<name>COX23_YEAST</name>
<organism>
    <name type="scientific">Saccharomyces cerevisiae (strain ATCC 204508 / S288c)</name>
    <name type="common">Baker's yeast</name>
    <dbReference type="NCBI Taxonomy" id="559292"/>
    <lineage>
        <taxon>Eukaryota</taxon>
        <taxon>Fungi</taxon>
        <taxon>Dikarya</taxon>
        <taxon>Ascomycota</taxon>
        <taxon>Saccharomycotina</taxon>
        <taxon>Saccharomycetes</taxon>
        <taxon>Saccharomycetales</taxon>
        <taxon>Saccharomycetaceae</taxon>
        <taxon>Saccharomyces</taxon>
    </lineage>
</organism>
<protein>
    <recommendedName>
        <fullName>Cytochrome c oxidase-assembly factor COX23, mitochondrial</fullName>
    </recommendedName>
</protein>
<sequence>MEKPSPTRRQTSSLSTISNGMTMTNDNRDTTNTNSGSTSSNNSQPSSSSTPPAASGPVTDRTKVNYVPKSDDPSSFQYYPDDPENPVNKYKFALKADSQYYDPCEESSKLSFQCLERNDYDRSKCQEYFDAYRECKKQWLTARRKNRQQWE</sequence>
<feature type="transit peptide" description="Mitochondrion" evidence="1">
    <location>
        <begin position="1"/>
        <end position="10"/>
    </location>
</feature>
<feature type="chain" id="PRO_0000202912" description="Cytochrome c oxidase-assembly factor COX23, mitochondrial">
    <location>
        <begin position="11"/>
        <end position="151"/>
    </location>
</feature>
<feature type="domain" description="CHCH" evidence="2">
    <location>
        <begin position="101"/>
        <end position="143"/>
    </location>
</feature>
<feature type="region of interest" description="Disordered" evidence="3">
    <location>
        <begin position="1"/>
        <end position="86"/>
    </location>
</feature>
<feature type="short sequence motif" description="Cx9C motif 1" evidence="2">
    <location>
        <begin position="104"/>
        <end position="114"/>
    </location>
</feature>
<feature type="short sequence motif" description="Cx9C motif 2" evidence="2">
    <location>
        <begin position="125"/>
        <end position="135"/>
    </location>
</feature>
<feature type="compositionally biased region" description="Polar residues" evidence="3">
    <location>
        <begin position="7"/>
        <end position="18"/>
    </location>
</feature>
<feature type="compositionally biased region" description="Low complexity" evidence="3">
    <location>
        <begin position="19"/>
        <end position="51"/>
    </location>
</feature>
<feature type="disulfide bond" evidence="2">
    <location>
        <begin position="104"/>
        <end position="135"/>
    </location>
</feature>
<feature type="disulfide bond" evidence="2">
    <location>
        <begin position="114"/>
        <end position="125"/>
    </location>
</feature>
<dbReference type="EMBL" id="U00059">
    <property type="protein sequence ID" value="AAB68866.1"/>
    <property type="molecule type" value="Genomic_DNA"/>
</dbReference>
<dbReference type="EMBL" id="AY692601">
    <property type="protein sequence ID" value="AAT92620.1"/>
    <property type="molecule type" value="Genomic_DNA"/>
</dbReference>
<dbReference type="EMBL" id="BK006934">
    <property type="protein sequence ID" value="DAA06810.1"/>
    <property type="molecule type" value="Genomic_DNA"/>
</dbReference>
<dbReference type="PIR" id="S48958">
    <property type="entry name" value="S48958"/>
</dbReference>
<dbReference type="RefSeq" id="NP_011984.1">
    <property type="nucleotide sequence ID" value="NM_001179246.1"/>
</dbReference>
<dbReference type="SMR" id="P38824"/>
<dbReference type="BioGRID" id="36549">
    <property type="interactions" value="273"/>
</dbReference>
<dbReference type="DIP" id="DIP-5306N"/>
<dbReference type="FunCoup" id="P38824">
    <property type="interactions" value="33"/>
</dbReference>
<dbReference type="IntAct" id="P38824">
    <property type="interactions" value="1"/>
</dbReference>
<dbReference type="MINT" id="P38824"/>
<dbReference type="STRING" id="4932.YHR116W"/>
<dbReference type="GlyGen" id="P38824">
    <property type="glycosylation" value="1 site"/>
</dbReference>
<dbReference type="PaxDb" id="4932-YHR116W"/>
<dbReference type="PeptideAtlas" id="P38824"/>
<dbReference type="EnsemblFungi" id="YHR116W_mRNA">
    <property type="protein sequence ID" value="YHR116W"/>
    <property type="gene ID" value="YHR116W"/>
</dbReference>
<dbReference type="GeneID" id="856516"/>
<dbReference type="KEGG" id="sce:YHR116W"/>
<dbReference type="AGR" id="SGD:S000001158"/>
<dbReference type="SGD" id="S000001158">
    <property type="gene designation" value="COX23"/>
</dbReference>
<dbReference type="VEuPathDB" id="FungiDB:YHR116W"/>
<dbReference type="eggNOG" id="KOG4618">
    <property type="taxonomic scope" value="Eukaryota"/>
</dbReference>
<dbReference type="HOGENOM" id="CLU_153383_1_0_1"/>
<dbReference type="InParanoid" id="P38824"/>
<dbReference type="OMA" id="NPENHRH"/>
<dbReference type="OrthoDB" id="9971592at2759"/>
<dbReference type="BioCyc" id="YEAST:G3O-31158-MONOMER"/>
<dbReference type="BioGRID-ORCS" id="856516">
    <property type="hits" value="8 hits in 10 CRISPR screens"/>
</dbReference>
<dbReference type="PRO" id="PR:P38824"/>
<dbReference type="Proteomes" id="UP000002311">
    <property type="component" value="Chromosome VIII"/>
</dbReference>
<dbReference type="RNAct" id="P38824">
    <property type="molecule type" value="protein"/>
</dbReference>
<dbReference type="GO" id="GO:0005737">
    <property type="term" value="C:cytoplasm"/>
    <property type="evidence" value="ECO:0000314"/>
    <property type="project" value="SGD"/>
</dbReference>
<dbReference type="GO" id="GO:0005758">
    <property type="term" value="C:mitochondrial intermembrane space"/>
    <property type="evidence" value="ECO:0000314"/>
    <property type="project" value="FlyBase"/>
</dbReference>
<dbReference type="GO" id="GO:0005739">
    <property type="term" value="C:mitochondrion"/>
    <property type="evidence" value="ECO:0000314"/>
    <property type="project" value="SGD"/>
</dbReference>
<dbReference type="GO" id="GO:0033617">
    <property type="term" value="P:mitochondrial cytochrome c oxidase assembly"/>
    <property type="evidence" value="ECO:0000315"/>
    <property type="project" value="FlyBase"/>
</dbReference>
<dbReference type="GO" id="GO:0033108">
    <property type="term" value="P:mitochondrial respiratory chain complex assembly"/>
    <property type="evidence" value="ECO:0000315"/>
    <property type="project" value="SGD"/>
</dbReference>
<dbReference type="Gene3D" id="1.10.287.1130">
    <property type="entry name" value="CytochromE C oxidase copper chaperone"/>
    <property type="match status" value="1"/>
</dbReference>
<dbReference type="InterPro" id="IPR010625">
    <property type="entry name" value="CHCH"/>
</dbReference>
<dbReference type="InterPro" id="IPR051040">
    <property type="entry name" value="COX23"/>
</dbReference>
<dbReference type="InterPro" id="IPR009069">
    <property type="entry name" value="Cys_alpha_HP_mot_SF"/>
</dbReference>
<dbReference type="PANTHER" id="PTHR46811">
    <property type="entry name" value="COILED-COIL-HELIX-COILED-COIL-HELIX DOMAIN-CONTAINING PROTEIN 7"/>
    <property type="match status" value="1"/>
</dbReference>
<dbReference type="PANTHER" id="PTHR46811:SF1">
    <property type="entry name" value="COILED-COIL-HELIX-COILED-COIL-HELIX DOMAIN-CONTAINING PROTEIN 7"/>
    <property type="match status" value="1"/>
</dbReference>
<dbReference type="Pfam" id="PF06747">
    <property type="entry name" value="CHCH"/>
    <property type="match status" value="1"/>
</dbReference>
<dbReference type="SUPFAM" id="SSF47072">
    <property type="entry name" value="Cysteine alpha-hairpin motif"/>
    <property type="match status" value="1"/>
</dbReference>
<dbReference type="PROSITE" id="PS51808">
    <property type="entry name" value="CHCH"/>
    <property type="match status" value="1"/>
</dbReference>
<comment type="function">
    <text evidence="5">Required for the assembly of cytochrome c oxidase.</text>
</comment>
<comment type="subcellular location">
    <subcellularLocation>
        <location evidence="5">Cytoplasm</location>
    </subcellularLocation>
    <subcellularLocation>
        <location evidence="5 6">Mitochondrion intermembrane space</location>
    </subcellularLocation>
</comment>
<comment type="miscellaneous">
    <text evidence="4">Present with 1360 molecules/cell in log phase SD medium.</text>
</comment>
<comment type="similarity">
    <text evidence="7">Belongs to the COX23 family.</text>
</comment>
<reference key="1">
    <citation type="journal article" date="1994" name="Science">
        <title>Complete nucleotide sequence of Saccharomyces cerevisiae chromosome VIII.</title>
        <authorList>
            <person name="Johnston M."/>
            <person name="Andrews S."/>
            <person name="Brinkman R."/>
            <person name="Cooper J."/>
            <person name="Ding H."/>
            <person name="Dover J."/>
            <person name="Du Z."/>
            <person name="Favello A."/>
            <person name="Fulton L."/>
            <person name="Gattung S."/>
            <person name="Geisel C."/>
            <person name="Kirsten J."/>
            <person name="Kucaba T."/>
            <person name="Hillier L.W."/>
            <person name="Jier M."/>
            <person name="Johnston L."/>
            <person name="Langston Y."/>
            <person name="Latreille P."/>
            <person name="Louis E.J."/>
            <person name="Macri C."/>
            <person name="Mardis E."/>
            <person name="Menezes S."/>
            <person name="Mouser L."/>
            <person name="Nhan M."/>
            <person name="Rifkin L."/>
            <person name="Riles L."/>
            <person name="St Peter H."/>
            <person name="Trevaskis E."/>
            <person name="Vaughan K."/>
            <person name="Vignati D."/>
            <person name="Wilcox L."/>
            <person name="Wohldman P."/>
            <person name="Waterston R."/>
            <person name="Wilson R."/>
            <person name="Vaudin M."/>
        </authorList>
    </citation>
    <scope>NUCLEOTIDE SEQUENCE [LARGE SCALE GENOMIC DNA]</scope>
    <source>
        <strain>ATCC 204508 / S288c</strain>
    </source>
</reference>
<reference key="2">
    <citation type="journal article" date="2014" name="G3 (Bethesda)">
        <title>The reference genome sequence of Saccharomyces cerevisiae: Then and now.</title>
        <authorList>
            <person name="Engel S.R."/>
            <person name="Dietrich F.S."/>
            <person name="Fisk D.G."/>
            <person name="Binkley G."/>
            <person name="Balakrishnan R."/>
            <person name="Costanzo M.C."/>
            <person name="Dwight S.S."/>
            <person name="Hitz B.C."/>
            <person name="Karra K."/>
            <person name="Nash R.S."/>
            <person name="Weng S."/>
            <person name="Wong E.D."/>
            <person name="Lloyd P."/>
            <person name="Skrzypek M.S."/>
            <person name="Miyasato S.R."/>
            <person name="Simison M."/>
            <person name="Cherry J.M."/>
        </authorList>
    </citation>
    <scope>GENOME REANNOTATION</scope>
    <source>
        <strain>ATCC 204508 / S288c</strain>
    </source>
</reference>
<reference key="3">
    <citation type="journal article" date="2007" name="Genome Res.">
        <title>Approaching a complete repository of sequence-verified protein-encoding clones for Saccharomyces cerevisiae.</title>
        <authorList>
            <person name="Hu Y."/>
            <person name="Rolfs A."/>
            <person name="Bhullar B."/>
            <person name="Murthy T.V.S."/>
            <person name="Zhu C."/>
            <person name="Berger M.F."/>
            <person name="Camargo A.A."/>
            <person name="Kelley F."/>
            <person name="McCarron S."/>
            <person name="Jepson D."/>
            <person name="Richardson A."/>
            <person name="Raphael J."/>
            <person name="Moreira D."/>
            <person name="Taycher E."/>
            <person name="Zuo D."/>
            <person name="Mohr S."/>
            <person name="Kane M.F."/>
            <person name="Williamson J."/>
            <person name="Simpson A.J.G."/>
            <person name="Bulyk M.L."/>
            <person name="Harlow E."/>
            <person name="Marsischky G."/>
            <person name="Kolodner R.D."/>
            <person name="LaBaer J."/>
        </authorList>
    </citation>
    <scope>NUCLEOTIDE SEQUENCE [GENOMIC DNA]</scope>
    <source>
        <strain>ATCC 204508 / S288c</strain>
    </source>
</reference>
<reference key="4">
    <citation type="journal article" date="2003" name="Nature">
        <title>Global analysis of protein localization in budding yeast.</title>
        <authorList>
            <person name="Huh W.-K."/>
            <person name="Falvo J.V."/>
            <person name="Gerke L.C."/>
            <person name="Carroll A.S."/>
            <person name="Howson R.W."/>
            <person name="Weissman J.S."/>
            <person name="O'Shea E.K."/>
        </authorList>
    </citation>
    <scope>SUBCELLULAR LOCATION [LARGE SCALE ANALYSIS]</scope>
</reference>
<reference key="5">
    <citation type="journal article" date="2003" name="Nature">
        <title>Global analysis of protein expression in yeast.</title>
        <authorList>
            <person name="Ghaemmaghami S."/>
            <person name="Huh W.-K."/>
            <person name="Bower K."/>
            <person name="Howson R.W."/>
            <person name="Belle A."/>
            <person name="Dephoure N."/>
            <person name="O'Shea E.K."/>
            <person name="Weissman J.S."/>
        </authorList>
    </citation>
    <scope>LEVEL OF PROTEIN EXPRESSION [LARGE SCALE ANALYSIS]</scope>
</reference>
<reference key="6">
    <citation type="journal article" date="2004" name="J. Biol. Chem.">
        <title>COX23, a homologue of COX17, is required for cytochrome oxidase assembly.</title>
        <authorList>
            <person name="Barros M.H."/>
            <person name="Johnson A."/>
            <person name="Tzagoloff A."/>
        </authorList>
    </citation>
    <scope>FUNCTION</scope>
    <scope>SUBCELLULAR LOCATION</scope>
</reference>
<reference key="7">
    <citation type="journal article" date="2007" name="J. Mol. Biol.">
        <title>Novel mitochondrial intermembrane space proteins as substrates of the MIA import pathway.</title>
        <authorList>
            <person name="Gabriel K."/>
            <person name="Milenkovic D."/>
            <person name="Chacinska A."/>
            <person name="Mueller J."/>
            <person name="Guiard B."/>
            <person name="Pfanner N."/>
            <person name="Meisinger C."/>
        </authorList>
    </citation>
    <scope>DOMAIN</scope>
</reference>
<reference key="8">
    <citation type="journal article" date="2012" name="Mol. Cell. Proteomics">
        <title>Intermembrane space proteome of yeast mitochondria.</title>
        <authorList>
            <person name="Voegtle F.N."/>
            <person name="Burkhart J.M."/>
            <person name="Rao S."/>
            <person name="Gerbeth C."/>
            <person name="Hinrichs J."/>
            <person name="Martinou J.C."/>
            <person name="Chacinska A."/>
            <person name="Sickmann A."/>
            <person name="Zahedi R.P."/>
            <person name="Meisinger C."/>
        </authorList>
    </citation>
    <scope>IDENTIFICATION BY MASS SPECTROMETRY</scope>
    <scope>SUBCELLULAR LOCATION [LARGE SCALE ANALYSIS]</scope>
</reference>
<proteinExistence type="evidence at protein level"/>